<protein>
    <recommendedName>
        <fullName evidence="1">Fatty acid metabolism regulator protein</fullName>
    </recommendedName>
</protein>
<gene>
    <name evidence="1" type="primary">fadR</name>
    <name type="ordered locus">VV2121</name>
</gene>
<feature type="chain" id="PRO_0000050639" description="Fatty acid metabolism regulator protein">
    <location>
        <begin position="1"/>
        <end position="279"/>
    </location>
</feature>
<feature type="domain" description="HTH gntR-type" evidence="1">
    <location>
        <begin position="6"/>
        <end position="74"/>
    </location>
</feature>
<feature type="DNA-binding region" description="H-T-H motif" evidence="1">
    <location>
        <begin position="34"/>
        <end position="53"/>
    </location>
</feature>
<organism>
    <name type="scientific">Vibrio vulnificus (strain YJ016)</name>
    <dbReference type="NCBI Taxonomy" id="196600"/>
    <lineage>
        <taxon>Bacteria</taxon>
        <taxon>Pseudomonadati</taxon>
        <taxon>Pseudomonadota</taxon>
        <taxon>Gammaproteobacteria</taxon>
        <taxon>Vibrionales</taxon>
        <taxon>Vibrionaceae</taxon>
        <taxon>Vibrio</taxon>
    </lineage>
</organism>
<comment type="function">
    <text evidence="1">Multifunctional regulator of fatty acid metabolism.</text>
</comment>
<comment type="subunit">
    <text evidence="1">Homodimer.</text>
</comment>
<comment type="subcellular location">
    <subcellularLocation>
        <location evidence="1">Cytoplasm</location>
    </subcellularLocation>
</comment>
<comment type="sequence caution" evidence="2">
    <conflict type="erroneous initiation">
        <sequence resource="EMBL-CDS" id="BAC94885"/>
    </conflict>
</comment>
<sequence length="279" mass="32073">MVIKAKSPAGFAEKYIIESIWNGRFPPGSILPAERELSELIGVTRTTLREVLQRLARDGWLTIQHGKPTKVNQFMETSGLHILDTLMTLDVDNATNIVEDLLAARTNISPIFMRYAFKVNKENSERTIKTVIDSCEQLVAAESWDAFLSSSPYADKIQQNVKEDNEKDEAKRQEILIAKTFNFYDYMLFQRLAFHSGNQIYGLIFNGLKKLYDRVGSFYFSNPASRELALKFYRQLLLTCESGQREQLPALIRQYGIESAMIWNEMKKQLPTNFTEDDC</sequence>
<name>FADR_VIBVY</name>
<proteinExistence type="inferred from homology"/>
<evidence type="ECO:0000255" key="1">
    <source>
        <dbReference type="HAMAP-Rule" id="MF_00696"/>
    </source>
</evidence>
<evidence type="ECO:0000305" key="2"/>
<keyword id="KW-0010">Activator</keyword>
<keyword id="KW-0963">Cytoplasm</keyword>
<keyword id="KW-0238">DNA-binding</keyword>
<keyword id="KW-0276">Fatty acid metabolism</keyword>
<keyword id="KW-0443">Lipid metabolism</keyword>
<keyword id="KW-0678">Repressor</keyword>
<keyword id="KW-0804">Transcription</keyword>
<keyword id="KW-0805">Transcription regulation</keyword>
<reference key="1">
    <citation type="journal article" date="2003" name="Genome Res.">
        <title>Comparative genome analysis of Vibrio vulnificus, a marine pathogen.</title>
        <authorList>
            <person name="Chen C.-Y."/>
            <person name="Wu K.-M."/>
            <person name="Chang Y.-C."/>
            <person name="Chang C.-H."/>
            <person name="Tsai H.-C."/>
            <person name="Liao T.-L."/>
            <person name="Liu Y.-M."/>
            <person name="Chen H.-J."/>
            <person name="Shen A.B.-T."/>
            <person name="Li J.-C."/>
            <person name="Su T.-L."/>
            <person name="Shao C.-P."/>
            <person name="Lee C.-T."/>
            <person name="Hor L.-I."/>
            <person name="Tsai S.-F."/>
        </authorList>
    </citation>
    <scope>NUCLEOTIDE SEQUENCE [LARGE SCALE GENOMIC DNA]</scope>
    <source>
        <strain>YJ016</strain>
    </source>
</reference>
<accession>Q7MJP0</accession>
<dbReference type="EMBL" id="BA000037">
    <property type="protein sequence ID" value="BAC94885.1"/>
    <property type="status" value="ALT_INIT"/>
    <property type="molecule type" value="Genomic_DNA"/>
</dbReference>
<dbReference type="RefSeq" id="WP_011080105.1">
    <property type="nucleotide sequence ID" value="NC_005139.1"/>
</dbReference>
<dbReference type="SMR" id="Q7MJP0"/>
<dbReference type="STRING" id="672.VV93_v1c18850"/>
<dbReference type="GeneID" id="93896421"/>
<dbReference type="KEGG" id="vvy:VV2121"/>
<dbReference type="eggNOG" id="COG2186">
    <property type="taxonomic scope" value="Bacteria"/>
</dbReference>
<dbReference type="HOGENOM" id="CLU_017584_9_4_6"/>
<dbReference type="Proteomes" id="UP000002675">
    <property type="component" value="Chromosome I"/>
</dbReference>
<dbReference type="GO" id="GO:0005737">
    <property type="term" value="C:cytoplasm"/>
    <property type="evidence" value="ECO:0007669"/>
    <property type="project" value="UniProtKB-SubCell"/>
</dbReference>
<dbReference type="GO" id="GO:0003677">
    <property type="term" value="F:DNA binding"/>
    <property type="evidence" value="ECO:0007669"/>
    <property type="project" value="UniProtKB-KW"/>
</dbReference>
<dbReference type="GO" id="GO:0003700">
    <property type="term" value="F:DNA-binding transcription factor activity"/>
    <property type="evidence" value="ECO:0007669"/>
    <property type="project" value="UniProtKB-UniRule"/>
</dbReference>
<dbReference type="GO" id="GO:0000062">
    <property type="term" value="F:fatty-acyl-CoA binding"/>
    <property type="evidence" value="ECO:0007669"/>
    <property type="project" value="InterPro"/>
</dbReference>
<dbReference type="GO" id="GO:0006631">
    <property type="term" value="P:fatty acid metabolic process"/>
    <property type="evidence" value="ECO:0007669"/>
    <property type="project" value="UniProtKB-KW"/>
</dbReference>
<dbReference type="GO" id="GO:0019217">
    <property type="term" value="P:regulation of fatty acid metabolic process"/>
    <property type="evidence" value="ECO:0007669"/>
    <property type="project" value="UniProtKB-UniRule"/>
</dbReference>
<dbReference type="CDD" id="cd07377">
    <property type="entry name" value="WHTH_GntR"/>
    <property type="match status" value="1"/>
</dbReference>
<dbReference type="Gene3D" id="1.20.120.530">
    <property type="entry name" value="GntR ligand-binding domain-like"/>
    <property type="match status" value="1"/>
</dbReference>
<dbReference type="Gene3D" id="1.10.10.10">
    <property type="entry name" value="Winged helix-like DNA-binding domain superfamily/Winged helix DNA-binding domain"/>
    <property type="match status" value="1"/>
</dbReference>
<dbReference type="HAMAP" id="MF_00696">
    <property type="entry name" value="HTH_FadR"/>
    <property type="match status" value="1"/>
</dbReference>
<dbReference type="InterPro" id="IPR014178">
    <property type="entry name" value="FA-response_TF_FadR"/>
</dbReference>
<dbReference type="InterPro" id="IPR028374">
    <property type="entry name" value="FadR_C"/>
</dbReference>
<dbReference type="InterPro" id="IPR008920">
    <property type="entry name" value="TF_FadR/GntR_C"/>
</dbReference>
<dbReference type="InterPro" id="IPR000524">
    <property type="entry name" value="Tscrpt_reg_HTH_GntR"/>
</dbReference>
<dbReference type="InterPro" id="IPR036388">
    <property type="entry name" value="WH-like_DNA-bd_sf"/>
</dbReference>
<dbReference type="InterPro" id="IPR036390">
    <property type="entry name" value="WH_DNA-bd_sf"/>
</dbReference>
<dbReference type="NCBIfam" id="TIGR02812">
    <property type="entry name" value="fadR_gamma"/>
    <property type="match status" value="1"/>
</dbReference>
<dbReference type="NCBIfam" id="NF003444">
    <property type="entry name" value="PRK04984.1"/>
    <property type="match status" value="1"/>
</dbReference>
<dbReference type="PANTHER" id="PTHR43537:SF52">
    <property type="entry name" value="FATTY ACID METABOLISM REGULATOR PROTEIN"/>
    <property type="match status" value="1"/>
</dbReference>
<dbReference type="PANTHER" id="PTHR43537">
    <property type="entry name" value="TRANSCRIPTIONAL REGULATOR, GNTR FAMILY"/>
    <property type="match status" value="1"/>
</dbReference>
<dbReference type="Pfam" id="PF07840">
    <property type="entry name" value="FadR_C"/>
    <property type="match status" value="1"/>
</dbReference>
<dbReference type="Pfam" id="PF00392">
    <property type="entry name" value="GntR"/>
    <property type="match status" value="1"/>
</dbReference>
<dbReference type="PRINTS" id="PR00035">
    <property type="entry name" value="HTHGNTR"/>
</dbReference>
<dbReference type="SMART" id="SM00345">
    <property type="entry name" value="HTH_GNTR"/>
    <property type="match status" value="1"/>
</dbReference>
<dbReference type="SUPFAM" id="SSF48008">
    <property type="entry name" value="GntR ligand-binding domain-like"/>
    <property type="match status" value="1"/>
</dbReference>
<dbReference type="SUPFAM" id="SSF46785">
    <property type="entry name" value="Winged helix' DNA-binding domain"/>
    <property type="match status" value="1"/>
</dbReference>
<dbReference type="PROSITE" id="PS50949">
    <property type="entry name" value="HTH_GNTR"/>
    <property type="match status" value="1"/>
</dbReference>